<gene>
    <name evidence="3" type="primary">SPDL1</name>
    <name evidence="3" type="synonym">CCDC99</name>
</gene>
<dbReference type="EMBL" id="BC123596">
    <property type="protein sequence ID" value="AAI23597.1"/>
    <property type="molecule type" value="mRNA"/>
</dbReference>
<dbReference type="RefSeq" id="NP_001070322.1">
    <property type="nucleotide sequence ID" value="NM_001076854.2"/>
</dbReference>
<dbReference type="SMR" id="Q08DR9"/>
<dbReference type="FunCoup" id="Q08DR9">
    <property type="interactions" value="2154"/>
</dbReference>
<dbReference type="STRING" id="9913.ENSBTAP00000010757"/>
<dbReference type="PaxDb" id="9913-ENSBTAP00000010757"/>
<dbReference type="GeneID" id="515158"/>
<dbReference type="KEGG" id="bta:515158"/>
<dbReference type="CTD" id="54908"/>
<dbReference type="eggNOG" id="ENOG502S27G">
    <property type="taxonomic scope" value="Eukaryota"/>
</dbReference>
<dbReference type="InParanoid" id="Q08DR9"/>
<dbReference type="OrthoDB" id="2121607at2759"/>
<dbReference type="Proteomes" id="UP000009136">
    <property type="component" value="Unplaced"/>
</dbReference>
<dbReference type="GO" id="GO:0005813">
    <property type="term" value="C:centrosome"/>
    <property type="evidence" value="ECO:0007669"/>
    <property type="project" value="UniProtKB-SubCell"/>
</dbReference>
<dbReference type="GO" id="GO:0005737">
    <property type="term" value="C:cytoplasm"/>
    <property type="evidence" value="ECO:0007669"/>
    <property type="project" value="UniProtKB-KW"/>
</dbReference>
<dbReference type="GO" id="GO:0005634">
    <property type="term" value="C:nucleus"/>
    <property type="evidence" value="ECO:0000250"/>
    <property type="project" value="UniProtKB"/>
</dbReference>
<dbReference type="GO" id="GO:0000940">
    <property type="term" value="C:outer kinetochore"/>
    <property type="evidence" value="ECO:0000250"/>
    <property type="project" value="UniProtKB"/>
</dbReference>
<dbReference type="GO" id="GO:0000922">
    <property type="term" value="C:spindle pole"/>
    <property type="evidence" value="ECO:0000250"/>
    <property type="project" value="UniProtKB"/>
</dbReference>
<dbReference type="GO" id="GO:0043515">
    <property type="term" value="F:kinetochore binding"/>
    <property type="evidence" value="ECO:0000250"/>
    <property type="project" value="UniProtKB"/>
</dbReference>
<dbReference type="GO" id="GO:0051301">
    <property type="term" value="P:cell division"/>
    <property type="evidence" value="ECO:0007669"/>
    <property type="project" value="UniProtKB-KW"/>
</dbReference>
<dbReference type="GO" id="GO:0016477">
    <property type="term" value="P:cell migration"/>
    <property type="evidence" value="ECO:0000250"/>
    <property type="project" value="UniProtKB"/>
</dbReference>
<dbReference type="GO" id="GO:0000132">
    <property type="term" value="P:establishment of mitotic spindle orientation"/>
    <property type="evidence" value="ECO:0000250"/>
    <property type="project" value="UniProtKB"/>
</dbReference>
<dbReference type="GO" id="GO:0007080">
    <property type="term" value="P:mitotic metaphase chromosome alignment"/>
    <property type="evidence" value="ECO:0000250"/>
    <property type="project" value="UniProtKB"/>
</dbReference>
<dbReference type="GO" id="GO:0007094">
    <property type="term" value="P:mitotic spindle assembly checkpoint signaling"/>
    <property type="evidence" value="ECO:0007669"/>
    <property type="project" value="InterPro"/>
</dbReference>
<dbReference type="GO" id="GO:0034501">
    <property type="term" value="P:protein localization to kinetochore"/>
    <property type="evidence" value="ECO:0000250"/>
    <property type="project" value="UniProtKB"/>
</dbReference>
<dbReference type="HAMAP" id="MF_03041">
    <property type="entry name" value="SPDLY"/>
    <property type="match status" value="1"/>
</dbReference>
<dbReference type="InterPro" id="IPR028593">
    <property type="entry name" value="SPDLY_chordates"/>
</dbReference>
<dbReference type="InterPro" id="IPR051149">
    <property type="entry name" value="Spindly/BICDR_Dynein_Adapter"/>
</dbReference>
<dbReference type="PANTHER" id="PTHR32123">
    <property type="entry name" value="BICD FAMILY-LIKE CARGO ADAPTER"/>
    <property type="match status" value="1"/>
</dbReference>
<dbReference type="PANTHER" id="PTHR32123:SF9">
    <property type="entry name" value="PROTEIN SPINDLY"/>
    <property type="match status" value="1"/>
</dbReference>
<organism>
    <name type="scientific">Bos taurus</name>
    <name type="common">Bovine</name>
    <dbReference type="NCBI Taxonomy" id="9913"/>
    <lineage>
        <taxon>Eukaryota</taxon>
        <taxon>Metazoa</taxon>
        <taxon>Chordata</taxon>
        <taxon>Craniata</taxon>
        <taxon>Vertebrata</taxon>
        <taxon>Euteleostomi</taxon>
        <taxon>Mammalia</taxon>
        <taxon>Eutheria</taxon>
        <taxon>Laurasiatheria</taxon>
        <taxon>Artiodactyla</taxon>
        <taxon>Ruminantia</taxon>
        <taxon>Pecora</taxon>
        <taxon>Bovidae</taxon>
        <taxon>Bovinae</taxon>
        <taxon>Bos</taxon>
    </lineage>
</organism>
<sequence>MESDVIADLRCKLKETEEERRKAAQYGLQLVESQNELQNQLDKCRNEMMTLTESYEQEKYTLQREVELKSRMLESLSSECETIKQQQKMHLEQLEETLSRSHGQEVNELKKKLETLKAELDEARLSEKQLKHKVDHQEKLLSSKSKEMQMSERVHESVSSETLTLQIELTEMENVKTTLQEEVNELQYRQEQLELLNANLMRQVDRLKGEKEEREKEAVSYYDALEKARVVNQDLQVQLDQALQQALDPNSKGNSLFAEVEDRRAAMERQLISMKVKYQSLKKQNAFNREQMQRMKVQIATLLQMKGSQAEFEQQERLLAMLEQKNGEIKHLLGEIRNLEKFKSLYESMESKPSANSVALEDDTYYTDLLQIKLDNLNKESESIKGELSIQRMKALLESQRALDIERKLFLNERHLQLSQSENMKLRAKLDELKLKYEPEEKIEVPVLKKRREVLPVDISTPNGVCAPSAVGEEDYRLSPQKEEAQSCSDGSEDNNLQLEKTVSVSTSGVILSPYKSLTLDIQPRKEKKCVKLTGVPADLEALSERSRNTPNSPRLAAESRLQREVKQGKETASKLEKAACKKSYPTVYVSSKSTPETQCPQQ</sequence>
<evidence type="ECO:0000250" key="1">
    <source>
        <dbReference type="UniProtKB" id="Q923A2"/>
    </source>
</evidence>
<evidence type="ECO:0000250" key="2">
    <source>
        <dbReference type="UniProtKB" id="Q96EA4"/>
    </source>
</evidence>
<evidence type="ECO:0000255" key="3">
    <source>
        <dbReference type="HAMAP-Rule" id="MF_03041"/>
    </source>
</evidence>
<evidence type="ECO:0000256" key="4">
    <source>
        <dbReference type="SAM" id="MobiDB-lite"/>
    </source>
</evidence>
<name>SPDLY_BOVIN</name>
<comment type="function">
    <text evidence="2 3">Required for the localization of dynein and dynactin to the mitotic kintochore. Dynein is believed to control the initial lateral interaction between the kinetochore and spindle microtubules and to facilitate the subsequent formation of end-on kinetochore-microtubule attachments mediated by the NDC80 complex. Also required for correct spindle orientation. Does not appear to be required for the removal of spindle assembly checkpoint (SAC) proteins from the kinetochore upon bipolar spindle attachment. Acts as an adapter protein linking the dynein motor complex to various cargos and converts dynein from a non-processive to a highly processive motor in the presence of dynactin. Facilitates the interaction between dynein and dynactin and activates dynein processivity (the ability to move along a microtubule for a long distance without falling off the track) (By similarity). Plays a role in cell migration (By similarity).</text>
</comment>
<comment type="subunit">
    <text evidence="2 3">Interacts with KNTC1 and ZW10. These interactions appear weak and may be transient or indirect. Interacts with dynein intermediate chain and dynactin (DCTN1) (By similarity). Interacts with the catalytically active form of USP45 (By similarity).</text>
</comment>
<comment type="subcellular location">
    <subcellularLocation>
        <location evidence="3">Cytoplasm</location>
        <location evidence="3">Cytoskeleton</location>
        <location evidence="3">Microtubule organizing center</location>
        <location evidence="3">Centrosome</location>
    </subcellularLocation>
    <subcellularLocation>
        <location evidence="3">Chromosome</location>
        <location evidence="3">Centromere</location>
        <location evidence="3">Kinetochore</location>
    </subcellularLocation>
    <subcellularLocation>
        <location evidence="3">Nucleus</location>
    </subcellularLocation>
    <subcellularLocation>
        <location evidence="3">Cytoplasm</location>
        <location evidence="3">Cytoskeleton</location>
        <location evidence="3">Spindle pole</location>
    </subcellularLocation>
    <text evidence="3">Localizes to the nucleus in interphase and to the kinetochore in early prometaphase. Relocalizes to the mitotic spindle pole before metaphase and is subsequently lost from the spindle poles after chromosome congression is completed. Removal of this protein from the kinetochore requires the dynein/dynactin complex.</text>
</comment>
<comment type="PTM">
    <text evidence="2">Monoubiquitinated with'Lys-48' linkage (By similarity). Deubiquitinated by USP45 (By similarity).</text>
</comment>
<comment type="similarity">
    <text evidence="3">Belongs to the Spindly family.</text>
</comment>
<proteinExistence type="evidence at transcript level"/>
<protein>
    <recommendedName>
        <fullName evidence="3">Protein Spindly</fullName>
    </recommendedName>
    <alternativeName>
        <fullName evidence="3">Coiled-coil domain-containing protein 99</fullName>
    </alternativeName>
    <alternativeName>
        <fullName evidence="3">Spindle apparatus coiled-coil domain-containing protein 1</fullName>
    </alternativeName>
</protein>
<reference key="1">
    <citation type="submission" date="2006-09" db="EMBL/GenBank/DDBJ databases">
        <authorList>
            <consortium name="NIH - Mammalian Gene Collection (MGC) project"/>
        </authorList>
    </citation>
    <scope>NUCLEOTIDE SEQUENCE [LARGE SCALE MRNA]</scope>
    <source>
        <strain>Hereford</strain>
        <tissue>Thymus</tissue>
    </source>
</reference>
<feature type="chain" id="PRO_0000274515" description="Protein Spindly">
    <location>
        <begin position="1"/>
        <end position="603"/>
    </location>
</feature>
<feature type="region of interest" description="Disordered" evidence="4">
    <location>
        <begin position="542"/>
        <end position="577"/>
    </location>
</feature>
<feature type="coiled-coil region" evidence="3">
    <location>
        <begin position="1"/>
        <end position="442"/>
    </location>
</feature>
<feature type="compositionally biased region" description="Basic and acidic residues" evidence="4">
    <location>
        <begin position="561"/>
        <end position="577"/>
    </location>
</feature>
<feature type="modified residue" description="N-acetylmethionine" evidence="2">
    <location>
        <position position="1"/>
    </location>
</feature>
<feature type="modified residue" description="Phosphoserine" evidence="2">
    <location>
        <position position="513"/>
    </location>
</feature>
<feature type="modified residue" description="Phosphoserine" evidence="1">
    <location>
        <position position="553"/>
    </location>
</feature>
<accession>Q08DR9</accession>
<keyword id="KW-0007">Acetylation</keyword>
<keyword id="KW-0131">Cell cycle</keyword>
<keyword id="KW-0132">Cell division</keyword>
<keyword id="KW-0137">Centromere</keyword>
<keyword id="KW-0158">Chromosome</keyword>
<keyword id="KW-0175">Coiled coil</keyword>
<keyword id="KW-0963">Cytoplasm</keyword>
<keyword id="KW-0206">Cytoskeleton</keyword>
<keyword id="KW-0995">Kinetochore</keyword>
<keyword id="KW-0498">Mitosis</keyword>
<keyword id="KW-0539">Nucleus</keyword>
<keyword id="KW-0597">Phosphoprotein</keyword>
<keyword id="KW-1185">Reference proteome</keyword>
<keyword id="KW-0832">Ubl conjugation</keyword>